<organism>
    <name type="scientific">Escherichia coli (strain K12 / DH10B)</name>
    <dbReference type="NCBI Taxonomy" id="316385"/>
    <lineage>
        <taxon>Bacteria</taxon>
        <taxon>Pseudomonadati</taxon>
        <taxon>Pseudomonadota</taxon>
        <taxon>Gammaproteobacteria</taxon>
        <taxon>Enterobacterales</taxon>
        <taxon>Enterobacteriaceae</taxon>
        <taxon>Escherichia</taxon>
    </lineage>
</organism>
<proteinExistence type="inferred from homology"/>
<dbReference type="EMBL" id="CP000948">
    <property type="protein sequence ID" value="ACB03906.1"/>
    <property type="molecule type" value="Genomic_DNA"/>
</dbReference>
<dbReference type="RefSeq" id="WP_000342431.1">
    <property type="nucleotide sequence ID" value="NC_010473.1"/>
</dbReference>
<dbReference type="SMR" id="B1XDK2"/>
<dbReference type="GeneID" id="93779205"/>
<dbReference type="KEGG" id="ecd:ECDH10B_2962"/>
<dbReference type="HOGENOM" id="CLU_121866_0_0_6"/>
<dbReference type="GO" id="GO:0009898">
    <property type="term" value="C:cytoplasmic side of plasma membrane"/>
    <property type="evidence" value="ECO:0007669"/>
    <property type="project" value="InterPro"/>
</dbReference>
<dbReference type="CDD" id="cd16323">
    <property type="entry name" value="Syd"/>
    <property type="match status" value="1"/>
</dbReference>
<dbReference type="FunFam" id="3.40.1580.20:FF:000001">
    <property type="entry name" value="Protein Syd"/>
    <property type="match status" value="1"/>
</dbReference>
<dbReference type="Gene3D" id="3.40.1580.20">
    <property type="entry name" value="Syd protein"/>
    <property type="match status" value="1"/>
</dbReference>
<dbReference type="HAMAP" id="MF_01104">
    <property type="entry name" value="Syd"/>
    <property type="match status" value="1"/>
</dbReference>
<dbReference type="InterPro" id="IPR009948">
    <property type="entry name" value="Syd"/>
</dbReference>
<dbReference type="InterPro" id="IPR038228">
    <property type="entry name" value="Syd_sf"/>
</dbReference>
<dbReference type="NCBIfam" id="NF003439">
    <property type="entry name" value="PRK04968.1"/>
    <property type="match status" value="1"/>
</dbReference>
<dbReference type="Pfam" id="PF07348">
    <property type="entry name" value="Syd"/>
    <property type="match status" value="1"/>
</dbReference>
<name>SYDP_ECODH</name>
<gene>
    <name evidence="1" type="primary">syd</name>
    <name type="ordered locus">ECDH10B_2962</name>
</gene>
<feature type="chain" id="PRO_1000137028" description="Protein Syd">
    <location>
        <begin position="1"/>
        <end position="181"/>
    </location>
</feature>
<accession>B1XDK2</accession>
<reference key="1">
    <citation type="journal article" date="2008" name="J. Bacteriol.">
        <title>The complete genome sequence of Escherichia coli DH10B: insights into the biology of a laboratory workhorse.</title>
        <authorList>
            <person name="Durfee T."/>
            <person name="Nelson R."/>
            <person name="Baldwin S."/>
            <person name="Plunkett G. III"/>
            <person name="Burland V."/>
            <person name="Mau B."/>
            <person name="Petrosino J.F."/>
            <person name="Qin X."/>
            <person name="Muzny D.M."/>
            <person name="Ayele M."/>
            <person name="Gibbs R.A."/>
            <person name="Csorgo B."/>
            <person name="Posfai G."/>
            <person name="Weinstock G.M."/>
            <person name="Blattner F.R."/>
        </authorList>
    </citation>
    <scope>NUCLEOTIDE SEQUENCE [LARGE SCALE GENOMIC DNA]</scope>
    <source>
        <strain>K12 / DH10B</strain>
    </source>
</reference>
<protein>
    <recommendedName>
        <fullName evidence="1">Protein Syd</fullName>
    </recommendedName>
</protein>
<comment type="function">
    <text evidence="1">Interacts with the SecY protein in vivo. May bind preferentially to an uncomplexed state of SecY, thus functioning either as a chelating agent for excess SecY in the cell or as a regulatory factor that negatively controls the translocase function.</text>
</comment>
<comment type="subcellular location">
    <subcellularLocation>
        <location evidence="1">Cell inner membrane</location>
        <topology evidence="1">Peripheral membrane protein</topology>
        <orientation evidence="1">Cytoplasmic side</orientation>
    </subcellularLocation>
    <text evidence="1">Loosely associated with the cytoplasmic side of the inner membrane, probably via SecY.</text>
</comment>
<comment type="similarity">
    <text evidence="1">Belongs to the Syd family.</text>
</comment>
<keyword id="KW-0997">Cell inner membrane</keyword>
<keyword id="KW-1003">Cell membrane</keyword>
<keyword id="KW-0472">Membrane</keyword>
<sequence length="181" mass="20708">MDDLTAQALKDFTARYCDAWHEEHKSWPLSEELYGVPSPCIISTTEDAVYWQPQPFTGEQNVNAVERAFDIVIQPTIHTFYTTQFAGDMHAQFGDIKLTLLQTWSEDDFRRVQENLIGHLVTQKRLKLPPTLFIATLEEELEVISVCNLSGEVCKETLGTRKRTHLASNLAEFLNQLKPLL</sequence>
<evidence type="ECO:0000255" key="1">
    <source>
        <dbReference type="HAMAP-Rule" id="MF_01104"/>
    </source>
</evidence>